<sequence length="621" mass="71033">MYRSMAILSSLRHAYSQISTRSYLSRSKVGFSSNLSSPLDSFAIVPSRFLWKFRTFSSKPDSMLQLVLENDWSKEVEEGLRKPDMSLTHETAIYVLRKLEKYPEKAYYFLDWVLRDSGLSPSTPLYSIMLRILVQQRSMKRFWMTLREMKQGGFYLDEDTYKTIYGELSKEKSKADAVAVAHFYERMLKENAMSVVAGEVSAVVTKGDWSCEVERELQEMKLVLSDNFVIRVLKELREHPLKALAFFHWVGGGGSSSGYQHSTVTYNAALRVLARPNSVAEFWSVVDEMKTAGYDMDLDTYIKVSRQFQKSRMMAETVKLYEYMMDGPFKPSIQDCSLLLRYLSGSPNPDLDLVFRVSRKYESTGKSLSKAVYDGIHRSLTSVGRFDEAEEITKAMRNAGYEPDNITYSQLVFGLCKAKRLEEARGVLDQMEAQGCFPDIKTWTILIQGHCKNNELDKALACFANMLEKGFDIDSNLLDVLIDGFVIHNKFEGASIFLMEMVKNANVKPWQSTYKLLIDKLLKIKKSEEALDLLQMMKKQNYPAYAEAFDGYLAKFGTLEDAKKFLDVLSSKDSPSFAAYFHVIEAFYREGRLTDAKNLLFICPHHFKTHPKISELFGAAA</sequence>
<name>PP269_ARATH</name>
<reference key="1">
    <citation type="journal article" date="2000" name="Nature">
        <title>Sequence and analysis of chromosome 3 of the plant Arabidopsis thaliana.</title>
        <authorList>
            <person name="Salanoubat M."/>
            <person name="Lemcke K."/>
            <person name="Rieger M."/>
            <person name="Ansorge W."/>
            <person name="Unseld M."/>
            <person name="Fartmann B."/>
            <person name="Valle G."/>
            <person name="Bloecker H."/>
            <person name="Perez-Alonso M."/>
            <person name="Obermaier B."/>
            <person name="Delseny M."/>
            <person name="Boutry M."/>
            <person name="Grivell L.A."/>
            <person name="Mache R."/>
            <person name="Puigdomenech P."/>
            <person name="De Simone V."/>
            <person name="Choisne N."/>
            <person name="Artiguenave F."/>
            <person name="Robert C."/>
            <person name="Brottier P."/>
            <person name="Wincker P."/>
            <person name="Cattolico L."/>
            <person name="Weissenbach J."/>
            <person name="Saurin W."/>
            <person name="Quetier F."/>
            <person name="Schaefer M."/>
            <person name="Mueller-Auer S."/>
            <person name="Gabel C."/>
            <person name="Fuchs M."/>
            <person name="Benes V."/>
            <person name="Wurmbach E."/>
            <person name="Drzonek H."/>
            <person name="Erfle H."/>
            <person name="Jordan N."/>
            <person name="Bangert S."/>
            <person name="Wiedelmann R."/>
            <person name="Kranz H."/>
            <person name="Voss H."/>
            <person name="Holland R."/>
            <person name="Brandt P."/>
            <person name="Nyakatura G."/>
            <person name="Vezzi A."/>
            <person name="D'Angelo M."/>
            <person name="Pallavicini A."/>
            <person name="Toppo S."/>
            <person name="Simionati B."/>
            <person name="Conrad A."/>
            <person name="Hornischer K."/>
            <person name="Kauer G."/>
            <person name="Loehnert T.-H."/>
            <person name="Nordsiek G."/>
            <person name="Reichelt J."/>
            <person name="Scharfe M."/>
            <person name="Schoen O."/>
            <person name="Bargues M."/>
            <person name="Terol J."/>
            <person name="Climent J."/>
            <person name="Navarro P."/>
            <person name="Collado C."/>
            <person name="Perez-Perez A."/>
            <person name="Ottenwaelder B."/>
            <person name="Duchemin D."/>
            <person name="Cooke R."/>
            <person name="Laudie M."/>
            <person name="Berger-Llauro C."/>
            <person name="Purnelle B."/>
            <person name="Masuy D."/>
            <person name="de Haan M."/>
            <person name="Maarse A.C."/>
            <person name="Alcaraz J.-P."/>
            <person name="Cottet A."/>
            <person name="Casacuberta E."/>
            <person name="Monfort A."/>
            <person name="Argiriou A."/>
            <person name="Flores M."/>
            <person name="Liguori R."/>
            <person name="Vitale D."/>
            <person name="Mannhaupt G."/>
            <person name="Haase D."/>
            <person name="Schoof H."/>
            <person name="Rudd S."/>
            <person name="Zaccaria P."/>
            <person name="Mewes H.-W."/>
            <person name="Mayer K.F.X."/>
            <person name="Kaul S."/>
            <person name="Town C.D."/>
            <person name="Koo H.L."/>
            <person name="Tallon L.J."/>
            <person name="Jenkins J."/>
            <person name="Rooney T."/>
            <person name="Rizzo M."/>
            <person name="Walts A."/>
            <person name="Utterback T."/>
            <person name="Fujii C.Y."/>
            <person name="Shea T.P."/>
            <person name="Creasy T.H."/>
            <person name="Haas B."/>
            <person name="Maiti R."/>
            <person name="Wu D."/>
            <person name="Peterson J."/>
            <person name="Van Aken S."/>
            <person name="Pai G."/>
            <person name="Militscher J."/>
            <person name="Sellers P."/>
            <person name="Gill J.E."/>
            <person name="Feldblyum T.V."/>
            <person name="Preuss D."/>
            <person name="Lin X."/>
            <person name="Nierman W.C."/>
            <person name="Salzberg S.L."/>
            <person name="White O."/>
            <person name="Venter J.C."/>
            <person name="Fraser C.M."/>
            <person name="Kaneko T."/>
            <person name="Nakamura Y."/>
            <person name="Sato S."/>
            <person name="Kato T."/>
            <person name="Asamizu E."/>
            <person name="Sasamoto S."/>
            <person name="Kimura T."/>
            <person name="Idesawa K."/>
            <person name="Kawashima K."/>
            <person name="Kishida Y."/>
            <person name="Kiyokawa C."/>
            <person name="Kohara M."/>
            <person name="Matsumoto M."/>
            <person name="Matsuno A."/>
            <person name="Muraki A."/>
            <person name="Nakayama S."/>
            <person name="Nakazaki N."/>
            <person name="Shinpo S."/>
            <person name="Takeuchi C."/>
            <person name="Wada T."/>
            <person name="Watanabe A."/>
            <person name="Yamada M."/>
            <person name="Yasuda M."/>
            <person name="Tabata S."/>
        </authorList>
    </citation>
    <scope>NUCLEOTIDE SEQUENCE [LARGE SCALE GENOMIC DNA]</scope>
    <source>
        <strain>cv. Columbia</strain>
    </source>
</reference>
<reference key="2">
    <citation type="journal article" date="2017" name="Plant J.">
        <title>Araport11: a complete reannotation of the Arabidopsis thaliana reference genome.</title>
        <authorList>
            <person name="Cheng C.Y."/>
            <person name="Krishnakumar V."/>
            <person name="Chan A.P."/>
            <person name="Thibaud-Nissen F."/>
            <person name="Schobel S."/>
            <person name="Town C.D."/>
        </authorList>
    </citation>
    <scope>GENOME REANNOTATION</scope>
    <source>
        <strain>cv. Columbia</strain>
    </source>
</reference>
<reference key="3">
    <citation type="journal article" date="2004" name="Plant Cell">
        <title>Genome-wide analysis of Arabidopsis pentatricopeptide repeat proteins reveals their essential role in organelle biogenesis.</title>
        <authorList>
            <person name="Lurin C."/>
            <person name="Andres C."/>
            <person name="Aubourg S."/>
            <person name="Bellaoui M."/>
            <person name="Bitton F."/>
            <person name="Bruyere C."/>
            <person name="Caboche M."/>
            <person name="Debast C."/>
            <person name="Gualberto J."/>
            <person name="Hoffmann B."/>
            <person name="Lecharny A."/>
            <person name="Le Ret M."/>
            <person name="Martin-Magniette M.-L."/>
            <person name="Mireau H."/>
            <person name="Peeters N."/>
            <person name="Renou J.-P."/>
            <person name="Szurek B."/>
            <person name="Taconnat L."/>
            <person name="Small I."/>
        </authorList>
    </citation>
    <scope>GENE FAMILY</scope>
</reference>
<keyword id="KW-0150">Chloroplast</keyword>
<keyword id="KW-0934">Plastid</keyword>
<keyword id="KW-1185">Reference proteome</keyword>
<keyword id="KW-0677">Repeat</keyword>
<keyword id="KW-0809">Transit peptide</keyword>
<dbReference type="EMBL" id="AL049659">
    <property type="protein sequence ID" value="CAB41173.1"/>
    <property type="molecule type" value="Genomic_DNA"/>
</dbReference>
<dbReference type="EMBL" id="CP002686">
    <property type="protein sequence ID" value="AEE78391.1"/>
    <property type="molecule type" value="Genomic_DNA"/>
</dbReference>
<dbReference type="PIR" id="T06717">
    <property type="entry name" value="T06717"/>
</dbReference>
<dbReference type="SMR" id="Q9STK5"/>
<dbReference type="FunCoup" id="Q9STK5">
    <property type="interactions" value="736"/>
</dbReference>
<dbReference type="STRING" id="3702.Q9STK5"/>
<dbReference type="PaxDb" id="3702-AT3G48250.1"/>
<dbReference type="ProteomicsDB" id="249110"/>
<dbReference type="EnsemblPlants" id="AT3G48250.1">
    <property type="protein sequence ID" value="AT3G48250.1"/>
    <property type="gene ID" value="AT3G48250"/>
</dbReference>
<dbReference type="Gramene" id="AT3G48250.1">
    <property type="protein sequence ID" value="AT3G48250.1"/>
    <property type="gene ID" value="AT3G48250"/>
</dbReference>
<dbReference type="KEGG" id="ath:AT3G48250"/>
<dbReference type="Araport" id="AT3G48250"/>
<dbReference type="TAIR" id="AT3G48250">
    <property type="gene designation" value="BIR6"/>
</dbReference>
<dbReference type="eggNOG" id="KOG4197">
    <property type="taxonomic scope" value="Eukaryota"/>
</dbReference>
<dbReference type="HOGENOM" id="CLU_022294_0_0_1"/>
<dbReference type="InParanoid" id="Q9STK5"/>
<dbReference type="OMA" id="FWDLIQE"/>
<dbReference type="PhylomeDB" id="Q9STK5"/>
<dbReference type="PRO" id="PR:Q9STK5"/>
<dbReference type="Proteomes" id="UP000006548">
    <property type="component" value="Chromosome 3"/>
</dbReference>
<dbReference type="ExpressionAtlas" id="Q9STK5">
    <property type="expression patterns" value="baseline and differential"/>
</dbReference>
<dbReference type="GO" id="GO:0009507">
    <property type="term" value="C:chloroplast"/>
    <property type="evidence" value="ECO:0007669"/>
    <property type="project" value="UniProtKB-SubCell"/>
</dbReference>
<dbReference type="GO" id="GO:0005739">
    <property type="term" value="C:mitochondrion"/>
    <property type="evidence" value="ECO:0000314"/>
    <property type="project" value="TAIR"/>
</dbReference>
<dbReference type="GO" id="GO:0008380">
    <property type="term" value="P:RNA splicing"/>
    <property type="evidence" value="ECO:0000315"/>
    <property type="project" value="TAIR"/>
</dbReference>
<dbReference type="FunFam" id="1.25.40.10:FF:002405">
    <property type="entry name" value="Pentatricopeptide repeat-containing protein"/>
    <property type="match status" value="1"/>
</dbReference>
<dbReference type="Gene3D" id="1.25.40.10">
    <property type="entry name" value="Tetratricopeptide repeat domain"/>
    <property type="match status" value="4"/>
</dbReference>
<dbReference type="InterPro" id="IPR044578">
    <property type="entry name" value="BIR6-like"/>
</dbReference>
<dbReference type="InterPro" id="IPR002885">
    <property type="entry name" value="Pentatricopeptide_rpt"/>
</dbReference>
<dbReference type="InterPro" id="IPR011990">
    <property type="entry name" value="TPR-like_helical_dom_sf"/>
</dbReference>
<dbReference type="NCBIfam" id="TIGR00756">
    <property type="entry name" value="PPR"/>
    <property type="match status" value="2"/>
</dbReference>
<dbReference type="PANTHER" id="PTHR47003">
    <property type="entry name" value="OS01G0970900 PROTEIN"/>
    <property type="match status" value="1"/>
</dbReference>
<dbReference type="PANTHER" id="PTHR47003:SF2">
    <property type="entry name" value="OS01G0970900 PROTEIN"/>
    <property type="match status" value="1"/>
</dbReference>
<dbReference type="Pfam" id="PF01535">
    <property type="entry name" value="PPR"/>
    <property type="match status" value="1"/>
</dbReference>
<dbReference type="Pfam" id="PF13041">
    <property type="entry name" value="PPR_2"/>
    <property type="match status" value="1"/>
</dbReference>
<dbReference type="PROSITE" id="PS51375">
    <property type="entry name" value="PPR"/>
    <property type="match status" value="9"/>
</dbReference>
<comment type="subcellular location">
    <subcellularLocation>
        <location evidence="2">Plastid</location>
        <location evidence="2">Chloroplast</location>
    </subcellularLocation>
</comment>
<comment type="similarity">
    <text evidence="2">Belongs to the PPR family. P subfamily.</text>
</comment>
<comment type="online information" name="Pentatricopeptide repeat proteins">
    <link uri="https://ppr.plantenergy.uwa.edu.au"/>
</comment>
<organism>
    <name type="scientific">Arabidopsis thaliana</name>
    <name type="common">Mouse-ear cress</name>
    <dbReference type="NCBI Taxonomy" id="3702"/>
    <lineage>
        <taxon>Eukaryota</taxon>
        <taxon>Viridiplantae</taxon>
        <taxon>Streptophyta</taxon>
        <taxon>Embryophyta</taxon>
        <taxon>Tracheophyta</taxon>
        <taxon>Spermatophyta</taxon>
        <taxon>Magnoliopsida</taxon>
        <taxon>eudicotyledons</taxon>
        <taxon>Gunneridae</taxon>
        <taxon>Pentapetalae</taxon>
        <taxon>rosids</taxon>
        <taxon>malvids</taxon>
        <taxon>Brassicales</taxon>
        <taxon>Brassicaceae</taxon>
        <taxon>Camelineae</taxon>
        <taxon>Arabidopsis</taxon>
    </lineage>
</organism>
<feature type="transit peptide" description="Chloroplast" evidence="1">
    <location>
        <begin position="1"/>
        <end position="67"/>
    </location>
</feature>
<feature type="chain" id="PRO_0000356128" description="Pentatricopeptide repeat-containing protein At3g48250, chloroplastic">
    <location>
        <begin position="68"/>
        <end position="621"/>
    </location>
</feature>
<feature type="repeat" description="PPR 1">
    <location>
        <begin position="122"/>
        <end position="156"/>
    </location>
</feature>
<feature type="repeat" description="PPR 2">
    <location>
        <begin position="157"/>
        <end position="194"/>
    </location>
</feature>
<feature type="repeat" description="PPR 3">
    <location>
        <begin position="262"/>
        <end position="296"/>
    </location>
</feature>
<feature type="repeat" description="PPR 4">
    <location>
        <begin position="297"/>
        <end position="331"/>
    </location>
</feature>
<feature type="repeat" description="PPR 5">
    <location>
        <begin position="332"/>
        <end position="368"/>
    </location>
</feature>
<feature type="repeat" description="PPR 6">
    <location>
        <begin position="369"/>
        <end position="403"/>
    </location>
</feature>
<feature type="repeat" description="PPR 7">
    <location>
        <begin position="404"/>
        <end position="438"/>
    </location>
</feature>
<feature type="repeat" description="PPR 8">
    <location>
        <begin position="439"/>
        <end position="473"/>
    </location>
</feature>
<feature type="repeat" description="PPR 9">
    <location>
        <begin position="474"/>
        <end position="509"/>
    </location>
</feature>
<feature type="repeat" description="PPR 10">
    <location>
        <begin position="510"/>
        <end position="544"/>
    </location>
</feature>
<proteinExistence type="evidence at transcript level"/>
<evidence type="ECO:0000255" key="1"/>
<evidence type="ECO:0000305" key="2"/>
<gene>
    <name type="ordered locus">At3g48250</name>
    <name type="ORF">T29H11_230</name>
</gene>
<accession>Q9STK5</accession>
<protein>
    <recommendedName>
        <fullName>Pentatricopeptide repeat-containing protein At3g48250, chloroplastic</fullName>
    </recommendedName>
</protein>